<proteinExistence type="inferred from homology"/>
<organism>
    <name type="scientific">Polaromonas naphthalenivorans (strain CJ2)</name>
    <dbReference type="NCBI Taxonomy" id="365044"/>
    <lineage>
        <taxon>Bacteria</taxon>
        <taxon>Pseudomonadati</taxon>
        <taxon>Pseudomonadota</taxon>
        <taxon>Betaproteobacteria</taxon>
        <taxon>Burkholderiales</taxon>
        <taxon>Comamonadaceae</taxon>
        <taxon>Polaromonas</taxon>
    </lineage>
</organism>
<dbReference type="EMBL" id="CP000529">
    <property type="protein sequence ID" value="ABM35534.1"/>
    <property type="molecule type" value="Genomic_DNA"/>
</dbReference>
<dbReference type="RefSeq" id="WP_011799642.1">
    <property type="nucleotide sequence ID" value="NC_008781.1"/>
</dbReference>
<dbReference type="SMR" id="A1VIQ6"/>
<dbReference type="STRING" id="365044.Pnap_0209"/>
<dbReference type="KEGG" id="pna:Pnap_0209"/>
<dbReference type="eggNOG" id="COG0092">
    <property type="taxonomic scope" value="Bacteria"/>
</dbReference>
<dbReference type="HOGENOM" id="CLU_058591_0_2_4"/>
<dbReference type="OrthoDB" id="9806396at2"/>
<dbReference type="Proteomes" id="UP000000644">
    <property type="component" value="Chromosome"/>
</dbReference>
<dbReference type="GO" id="GO:0022627">
    <property type="term" value="C:cytosolic small ribosomal subunit"/>
    <property type="evidence" value="ECO:0007669"/>
    <property type="project" value="TreeGrafter"/>
</dbReference>
<dbReference type="GO" id="GO:0003729">
    <property type="term" value="F:mRNA binding"/>
    <property type="evidence" value="ECO:0007669"/>
    <property type="project" value="UniProtKB-UniRule"/>
</dbReference>
<dbReference type="GO" id="GO:0019843">
    <property type="term" value="F:rRNA binding"/>
    <property type="evidence" value="ECO:0007669"/>
    <property type="project" value="UniProtKB-UniRule"/>
</dbReference>
<dbReference type="GO" id="GO:0003735">
    <property type="term" value="F:structural constituent of ribosome"/>
    <property type="evidence" value="ECO:0007669"/>
    <property type="project" value="InterPro"/>
</dbReference>
<dbReference type="GO" id="GO:0006412">
    <property type="term" value="P:translation"/>
    <property type="evidence" value="ECO:0007669"/>
    <property type="project" value="UniProtKB-UniRule"/>
</dbReference>
<dbReference type="CDD" id="cd02412">
    <property type="entry name" value="KH-II_30S_S3"/>
    <property type="match status" value="1"/>
</dbReference>
<dbReference type="FunFam" id="3.30.1140.32:FF:000006">
    <property type="entry name" value="30S ribosomal protein S3"/>
    <property type="match status" value="1"/>
</dbReference>
<dbReference type="FunFam" id="3.30.300.20:FF:000001">
    <property type="entry name" value="30S ribosomal protein S3"/>
    <property type="match status" value="1"/>
</dbReference>
<dbReference type="Gene3D" id="3.30.300.20">
    <property type="match status" value="1"/>
</dbReference>
<dbReference type="Gene3D" id="3.30.1140.32">
    <property type="entry name" value="Ribosomal protein S3, C-terminal domain"/>
    <property type="match status" value="1"/>
</dbReference>
<dbReference type="HAMAP" id="MF_01309_B">
    <property type="entry name" value="Ribosomal_uS3_B"/>
    <property type="match status" value="1"/>
</dbReference>
<dbReference type="InterPro" id="IPR004087">
    <property type="entry name" value="KH_dom"/>
</dbReference>
<dbReference type="InterPro" id="IPR015946">
    <property type="entry name" value="KH_dom-like_a/b"/>
</dbReference>
<dbReference type="InterPro" id="IPR004044">
    <property type="entry name" value="KH_dom_type_2"/>
</dbReference>
<dbReference type="InterPro" id="IPR009019">
    <property type="entry name" value="KH_sf_prok-type"/>
</dbReference>
<dbReference type="InterPro" id="IPR036419">
    <property type="entry name" value="Ribosomal_S3_C_sf"/>
</dbReference>
<dbReference type="InterPro" id="IPR005704">
    <property type="entry name" value="Ribosomal_uS3_bac-typ"/>
</dbReference>
<dbReference type="InterPro" id="IPR001351">
    <property type="entry name" value="Ribosomal_uS3_C"/>
</dbReference>
<dbReference type="InterPro" id="IPR018280">
    <property type="entry name" value="Ribosomal_uS3_CS"/>
</dbReference>
<dbReference type="NCBIfam" id="TIGR01009">
    <property type="entry name" value="rpsC_bact"/>
    <property type="match status" value="1"/>
</dbReference>
<dbReference type="PANTHER" id="PTHR11760">
    <property type="entry name" value="30S/40S RIBOSOMAL PROTEIN S3"/>
    <property type="match status" value="1"/>
</dbReference>
<dbReference type="PANTHER" id="PTHR11760:SF19">
    <property type="entry name" value="SMALL RIBOSOMAL SUBUNIT PROTEIN US3C"/>
    <property type="match status" value="1"/>
</dbReference>
<dbReference type="Pfam" id="PF07650">
    <property type="entry name" value="KH_2"/>
    <property type="match status" value="1"/>
</dbReference>
<dbReference type="Pfam" id="PF00189">
    <property type="entry name" value="Ribosomal_S3_C"/>
    <property type="match status" value="1"/>
</dbReference>
<dbReference type="SMART" id="SM00322">
    <property type="entry name" value="KH"/>
    <property type="match status" value="1"/>
</dbReference>
<dbReference type="SUPFAM" id="SSF54814">
    <property type="entry name" value="Prokaryotic type KH domain (KH-domain type II)"/>
    <property type="match status" value="1"/>
</dbReference>
<dbReference type="SUPFAM" id="SSF54821">
    <property type="entry name" value="Ribosomal protein S3 C-terminal domain"/>
    <property type="match status" value="1"/>
</dbReference>
<dbReference type="PROSITE" id="PS50823">
    <property type="entry name" value="KH_TYPE_2"/>
    <property type="match status" value="1"/>
</dbReference>
<dbReference type="PROSITE" id="PS00548">
    <property type="entry name" value="RIBOSOMAL_S3"/>
    <property type="match status" value="1"/>
</dbReference>
<evidence type="ECO:0000255" key="1">
    <source>
        <dbReference type="HAMAP-Rule" id="MF_01309"/>
    </source>
</evidence>
<evidence type="ECO:0000256" key="2">
    <source>
        <dbReference type="SAM" id="MobiDB-lite"/>
    </source>
</evidence>
<evidence type="ECO:0000305" key="3"/>
<sequence length="295" mass="32557">MGQKINPTGFRLSISRNWSSRWYANNRDFAGMLAEDIKVREYLKKKLKNAAVSRVLIERPAKNARITIFSARPGVVIGKKGEDIEALKKELSRQLGVPVAVNIEEVRKPEIDAKLIADSITQQLEKRIMFRRAMKRAMQNAMRLGALGIKIMSSGRLNGIEIARCEWYREGRVPLHTLRADIDYGTSEAQTTYGIIGVKVWVYKGDTLGRNDGTGAKMIEVADEERKPRGPRRDARPGDRPDRGAPRGAPRAPRGNYAPADGSDKPAEAAGADNNTVKRVRKAAPAAAADGAKTE</sequence>
<gene>
    <name evidence="1" type="primary">rpsC</name>
    <name type="ordered locus">Pnap_0209</name>
</gene>
<feature type="chain" id="PRO_0000293848" description="Small ribosomal subunit protein uS3">
    <location>
        <begin position="1"/>
        <end position="295"/>
    </location>
</feature>
<feature type="domain" description="KH type-2" evidence="1">
    <location>
        <begin position="39"/>
        <end position="107"/>
    </location>
</feature>
<feature type="region of interest" description="Disordered" evidence="2">
    <location>
        <begin position="213"/>
        <end position="295"/>
    </location>
</feature>
<feature type="compositionally biased region" description="Basic and acidic residues" evidence="2">
    <location>
        <begin position="224"/>
        <end position="245"/>
    </location>
</feature>
<feature type="compositionally biased region" description="Low complexity" evidence="2">
    <location>
        <begin position="246"/>
        <end position="255"/>
    </location>
</feature>
<feature type="compositionally biased region" description="Low complexity" evidence="2">
    <location>
        <begin position="283"/>
        <end position="295"/>
    </location>
</feature>
<keyword id="KW-1185">Reference proteome</keyword>
<keyword id="KW-0687">Ribonucleoprotein</keyword>
<keyword id="KW-0689">Ribosomal protein</keyword>
<keyword id="KW-0694">RNA-binding</keyword>
<keyword id="KW-0699">rRNA-binding</keyword>
<reference key="1">
    <citation type="journal article" date="2009" name="Environ. Microbiol.">
        <title>The genome of Polaromonas naphthalenivorans strain CJ2, isolated from coal tar-contaminated sediment, reveals physiological and metabolic versatility and evolution through extensive horizontal gene transfer.</title>
        <authorList>
            <person name="Yagi J.M."/>
            <person name="Sims D."/>
            <person name="Brettin T."/>
            <person name="Bruce D."/>
            <person name="Madsen E.L."/>
        </authorList>
    </citation>
    <scope>NUCLEOTIDE SEQUENCE [LARGE SCALE GENOMIC DNA]</scope>
    <source>
        <strain>CJ2</strain>
    </source>
</reference>
<protein>
    <recommendedName>
        <fullName evidence="1">Small ribosomal subunit protein uS3</fullName>
    </recommendedName>
    <alternativeName>
        <fullName evidence="3">30S ribosomal protein S3</fullName>
    </alternativeName>
</protein>
<comment type="function">
    <text evidence="1">Binds the lower part of the 30S subunit head. Binds mRNA in the 70S ribosome, positioning it for translation.</text>
</comment>
<comment type="subunit">
    <text evidence="1">Part of the 30S ribosomal subunit. Forms a tight complex with proteins S10 and S14.</text>
</comment>
<comment type="similarity">
    <text evidence="1">Belongs to the universal ribosomal protein uS3 family.</text>
</comment>
<name>RS3_POLNA</name>
<accession>A1VIQ6</accession>